<name>NU4LC_NICSY</name>
<accession>Q3C1Q2</accession>
<reference key="1">
    <citation type="journal article" date="2006" name="Mol. Genet. Genomics">
        <title>The chloroplast genome of Nicotiana sylvestris and Nicotiana tomentosiformis: complete sequencing confirms that the Nicotiana sylvestris progenitor is the maternal genome donor of Nicotiana tabacum.</title>
        <authorList>
            <person name="Yukawa M."/>
            <person name="Tsudzuki T."/>
            <person name="Sugiura M."/>
        </authorList>
    </citation>
    <scope>NUCLEOTIDE SEQUENCE [LARGE SCALE GENOMIC DNA]</scope>
</reference>
<protein>
    <recommendedName>
        <fullName evidence="1">NAD(P)H-quinone oxidoreductase subunit 4L, chloroplastic</fullName>
        <ecNumber evidence="1">7.1.1.-</ecNumber>
    </recommendedName>
    <alternativeName>
        <fullName evidence="1">NAD(P)H dehydrogenase subunit 4L</fullName>
    </alternativeName>
    <alternativeName>
        <fullName evidence="1">NADH-plastoquinone oxidoreductase subunit 4L</fullName>
    </alternativeName>
</protein>
<geneLocation type="chloroplast"/>
<comment type="function">
    <text evidence="1">NDH shuttles electrons from NAD(P)H:plastoquinone, via FMN and iron-sulfur (Fe-S) centers, to quinones in the photosynthetic chain and possibly in a chloroplast respiratory chain. The immediate electron acceptor for the enzyme in this species is believed to be plastoquinone. Couples the redox reaction to proton translocation, and thus conserves the redox energy in a proton gradient.</text>
</comment>
<comment type="catalytic activity">
    <reaction evidence="1">
        <text>a plastoquinone + NADH + (n+1) H(+)(in) = a plastoquinol + NAD(+) + n H(+)(out)</text>
        <dbReference type="Rhea" id="RHEA:42608"/>
        <dbReference type="Rhea" id="RHEA-COMP:9561"/>
        <dbReference type="Rhea" id="RHEA-COMP:9562"/>
        <dbReference type="ChEBI" id="CHEBI:15378"/>
        <dbReference type="ChEBI" id="CHEBI:17757"/>
        <dbReference type="ChEBI" id="CHEBI:57540"/>
        <dbReference type="ChEBI" id="CHEBI:57945"/>
        <dbReference type="ChEBI" id="CHEBI:62192"/>
    </reaction>
</comment>
<comment type="catalytic activity">
    <reaction evidence="1">
        <text>a plastoquinone + NADPH + (n+1) H(+)(in) = a plastoquinol + NADP(+) + n H(+)(out)</text>
        <dbReference type="Rhea" id="RHEA:42612"/>
        <dbReference type="Rhea" id="RHEA-COMP:9561"/>
        <dbReference type="Rhea" id="RHEA-COMP:9562"/>
        <dbReference type="ChEBI" id="CHEBI:15378"/>
        <dbReference type="ChEBI" id="CHEBI:17757"/>
        <dbReference type="ChEBI" id="CHEBI:57783"/>
        <dbReference type="ChEBI" id="CHEBI:58349"/>
        <dbReference type="ChEBI" id="CHEBI:62192"/>
    </reaction>
</comment>
<comment type="subunit">
    <text evidence="1">NDH is composed of at least 16 different subunits, 5 of which are encoded in the nucleus.</text>
</comment>
<comment type="subcellular location">
    <subcellularLocation>
        <location evidence="1">Plastid</location>
        <location evidence="1">Chloroplast thylakoid membrane</location>
        <topology evidence="1">Multi-pass membrane protein</topology>
    </subcellularLocation>
</comment>
<comment type="similarity">
    <text evidence="1">Belongs to the complex I subunit 4L family.</text>
</comment>
<proteinExistence type="inferred from homology"/>
<organism>
    <name type="scientific">Nicotiana sylvestris</name>
    <name type="common">Wood tobacco</name>
    <name type="synonym">South American tobacco</name>
    <dbReference type="NCBI Taxonomy" id="4096"/>
    <lineage>
        <taxon>Eukaryota</taxon>
        <taxon>Viridiplantae</taxon>
        <taxon>Streptophyta</taxon>
        <taxon>Embryophyta</taxon>
        <taxon>Tracheophyta</taxon>
        <taxon>Spermatophyta</taxon>
        <taxon>Magnoliopsida</taxon>
        <taxon>eudicotyledons</taxon>
        <taxon>Gunneridae</taxon>
        <taxon>Pentapetalae</taxon>
        <taxon>asterids</taxon>
        <taxon>lamiids</taxon>
        <taxon>Solanales</taxon>
        <taxon>Solanaceae</taxon>
        <taxon>Nicotianoideae</taxon>
        <taxon>Nicotianeae</taxon>
        <taxon>Nicotiana</taxon>
    </lineage>
</organism>
<evidence type="ECO:0000255" key="1">
    <source>
        <dbReference type="HAMAP-Rule" id="MF_01456"/>
    </source>
</evidence>
<gene>
    <name evidence="1" type="primary">ndhE</name>
</gene>
<sequence length="101" mass="11270">MILEHVLVLSAYLFSIGIYGLITSRNMVRALMCLELILNAVNINFVTFSDFFDNRQLKGDIFSIFVIAIAAAEAAIGLAIVSSIYRNRKSTRINQSNLLNN</sequence>
<feature type="chain" id="PRO_0000360348" description="NAD(P)H-quinone oxidoreductase subunit 4L, chloroplastic">
    <location>
        <begin position="1"/>
        <end position="101"/>
    </location>
</feature>
<feature type="transmembrane region" description="Helical" evidence="1">
    <location>
        <begin position="2"/>
        <end position="22"/>
    </location>
</feature>
<feature type="transmembrane region" description="Helical" evidence="1">
    <location>
        <begin position="32"/>
        <end position="52"/>
    </location>
</feature>
<feature type="transmembrane region" description="Helical" evidence="1">
    <location>
        <begin position="61"/>
        <end position="81"/>
    </location>
</feature>
<keyword id="KW-0150">Chloroplast</keyword>
<keyword id="KW-0472">Membrane</keyword>
<keyword id="KW-0520">NAD</keyword>
<keyword id="KW-0521">NADP</keyword>
<keyword id="KW-0934">Plastid</keyword>
<keyword id="KW-0618">Plastoquinone</keyword>
<keyword id="KW-0874">Quinone</keyword>
<keyword id="KW-1185">Reference proteome</keyword>
<keyword id="KW-0793">Thylakoid</keyword>
<keyword id="KW-1278">Translocase</keyword>
<keyword id="KW-0812">Transmembrane</keyword>
<keyword id="KW-1133">Transmembrane helix</keyword>
<keyword id="KW-0813">Transport</keyword>
<dbReference type="EC" id="7.1.1.-" evidence="1"/>
<dbReference type="EMBL" id="AB237912">
    <property type="protein sequence ID" value="BAE46716.1"/>
    <property type="molecule type" value="Genomic_DNA"/>
</dbReference>
<dbReference type="RefSeq" id="YP_358739.1">
    <property type="nucleotide sequence ID" value="NC_007500.1"/>
</dbReference>
<dbReference type="SMR" id="Q3C1Q2"/>
<dbReference type="GeneID" id="3735063"/>
<dbReference type="KEGG" id="nsy:3735063"/>
<dbReference type="OrthoDB" id="28747at4085"/>
<dbReference type="Proteomes" id="UP000189701">
    <property type="component" value="Chloroplast Pltd"/>
</dbReference>
<dbReference type="GO" id="GO:0009535">
    <property type="term" value="C:chloroplast thylakoid membrane"/>
    <property type="evidence" value="ECO:0007669"/>
    <property type="project" value="UniProtKB-SubCell"/>
</dbReference>
<dbReference type="GO" id="GO:0030964">
    <property type="term" value="C:NADH dehydrogenase complex"/>
    <property type="evidence" value="ECO:0007669"/>
    <property type="project" value="TreeGrafter"/>
</dbReference>
<dbReference type="GO" id="GO:0016655">
    <property type="term" value="F:oxidoreductase activity, acting on NAD(P)H, quinone or similar compound as acceptor"/>
    <property type="evidence" value="ECO:0007669"/>
    <property type="project" value="UniProtKB-UniRule"/>
</dbReference>
<dbReference type="GO" id="GO:0048038">
    <property type="term" value="F:quinone binding"/>
    <property type="evidence" value="ECO:0007669"/>
    <property type="project" value="UniProtKB-KW"/>
</dbReference>
<dbReference type="GO" id="GO:0042773">
    <property type="term" value="P:ATP synthesis coupled electron transport"/>
    <property type="evidence" value="ECO:0007669"/>
    <property type="project" value="InterPro"/>
</dbReference>
<dbReference type="GO" id="GO:0019684">
    <property type="term" value="P:photosynthesis, light reaction"/>
    <property type="evidence" value="ECO:0007669"/>
    <property type="project" value="UniProtKB-UniRule"/>
</dbReference>
<dbReference type="FunFam" id="1.10.287.3510:FF:000001">
    <property type="entry name" value="NADH-quinone oxidoreductase subunit K"/>
    <property type="match status" value="1"/>
</dbReference>
<dbReference type="Gene3D" id="1.10.287.3510">
    <property type="match status" value="1"/>
</dbReference>
<dbReference type="HAMAP" id="MF_01456">
    <property type="entry name" value="NDH1_NuoK"/>
    <property type="match status" value="1"/>
</dbReference>
<dbReference type="InterPro" id="IPR001133">
    <property type="entry name" value="NADH_UbQ_OxRdtase_chain4L/K"/>
</dbReference>
<dbReference type="InterPro" id="IPR039428">
    <property type="entry name" value="NUOK/Mnh_C1-like"/>
</dbReference>
<dbReference type="NCBIfam" id="NF004320">
    <property type="entry name" value="PRK05715.1-2"/>
    <property type="match status" value="1"/>
</dbReference>
<dbReference type="NCBIfam" id="NF004322">
    <property type="entry name" value="PRK05715.1-4"/>
    <property type="match status" value="1"/>
</dbReference>
<dbReference type="NCBIfam" id="NF004323">
    <property type="entry name" value="PRK05715.1-5"/>
    <property type="match status" value="1"/>
</dbReference>
<dbReference type="PANTHER" id="PTHR11434:SF16">
    <property type="entry name" value="NADH-UBIQUINONE OXIDOREDUCTASE CHAIN 4L"/>
    <property type="match status" value="1"/>
</dbReference>
<dbReference type="PANTHER" id="PTHR11434">
    <property type="entry name" value="NADH-UBIQUINONE OXIDOREDUCTASE SUBUNIT ND4L"/>
    <property type="match status" value="1"/>
</dbReference>
<dbReference type="Pfam" id="PF00420">
    <property type="entry name" value="Oxidored_q2"/>
    <property type="match status" value="1"/>
</dbReference>